<evidence type="ECO:0000256" key="1">
    <source>
        <dbReference type="SAM" id="MobiDB-lite"/>
    </source>
</evidence>
<evidence type="ECO:0007744" key="2">
    <source>
    </source>
</evidence>
<evidence type="ECO:0007744" key="3">
    <source>
    </source>
</evidence>
<reference key="1">
    <citation type="journal article" date="1997" name="Yeast">
        <title>An 18.3 kb DNA fragment from yeast chromosome VII carries four unknown open reading frames, the gene for an Asn synthase, remnants of Ty and three tRNA genes.</title>
        <authorList>
            <person name="van Dyck L."/>
            <person name="Tettelin H."/>
            <person name="Purnelle B."/>
            <person name="Goffeau A."/>
        </authorList>
    </citation>
    <scope>NUCLEOTIDE SEQUENCE [GENOMIC DNA]</scope>
    <source>
        <strain>ATCC 96604 / S288c / FY1679</strain>
    </source>
</reference>
<reference key="2">
    <citation type="journal article" date="1997" name="Nature">
        <title>The nucleotide sequence of Saccharomyces cerevisiae chromosome VII.</title>
        <authorList>
            <person name="Tettelin H."/>
            <person name="Agostoni-Carbone M.L."/>
            <person name="Albermann K."/>
            <person name="Albers M."/>
            <person name="Arroyo J."/>
            <person name="Backes U."/>
            <person name="Barreiros T."/>
            <person name="Bertani I."/>
            <person name="Bjourson A.J."/>
            <person name="Brueckner M."/>
            <person name="Bruschi C.V."/>
            <person name="Carignani G."/>
            <person name="Castagnoli L."/>
            <person name="Cerdan E."/>
            <person name="Clemente M.L."/>
            <person name="Coblenz A."/>
            <person name="Coglievina M."/>
            <person name="Coissac E."/>
            <person name="Defoor E."/>
            <person name="Del Bino S."/>
            <person name="Delius H."/>
            <person name="Delneri D."/>
            <person name="de Wergifosse P."/>
            <person name="Dujon B."/>
            <person name="Durand P."/>
            <person name="Entian K.-D."/>
            <person name="Eraso P."/>
            <person name="Escribano V."/>
            <person name="Fabiani L."/>
            <person name="Fartmann B."/>
            <person name="Feroli F."/>
            <person name="Feuermann M."/>
            <person name="Frontali L."/>
            <person name="Garcia-Gonzalez M."/>
            <person name="Garcia-Saez M.I."/>
            <person name="Goffeau A."/>
            <person name="Guerreiro P."/>
            <person name="Hani J."/>
            <person name="Hansen M."/>
            <person name="Hebling U."/>
            <person name="Hernandez K."/>
            <person name="Heumann K."/>
            <person name="Hilger F."/>
            <person name="Hofmann B."/>
            <person name="Indge K.J."/>
            <person name="James C.M."/>
            <person name="Klima R."/>
            <person name="Koetter P."/>
            <person name="Kramer B."/>
            <person name="Kramer W."/>
            <person name="Lauquin G."/>
            <person name="Leuther H."/>
            <person name="Louis E.J."/>
            <person name="Maillier E."/>
            <person name="Marconi A."/>
            <person name="Martegani E."/>
            <person name="Mazon M.J."/>
            <person name="Mazzoni C."/>
            <person name="McReynolds A.D.K."/>
            <person name="Melchioretto P."/>
            <person name="Mewes H.-W."/>
            <person name="Minenkova O."/>
            <person name="Mueller-Auer S."/>
            <person name="Nawrocki A."/>
            <person name="Netter P."/>
            <person name="Neu R."/>
            <person name="Nombela C."/>
            <person name="Oliver S.G."/>
            <person name="Panzeri L."/>
            <person name="Paoluzi S."/>
            <person name="Plevani P."/>
            <person name="Portetelle D."/>
            <person name="Portillo F."/>
            <person name="Potier S."/>
            <person name="Purnelle B."/>
            <person name="Rieger M."/>
            <person name="Riles L."/>
            <person name="Rinaldi T."/>
            <person name="Robben J."/>
            <person name="Rodrigues-Pousada C."/>
            <person name="Rodriguez-Belmonte E."/>
            <person name="Rodriguez-Torres A.M."/>
            <person name="Rose M."/>
            <person name="Ruzzi M."/>
            <person name="Saliola M."/>
            <person name="Sanchez-Perez M."/>
            <person name="Schaefer B."/>
            <person name="Schaefer M."/>
            <person name="Scharfe M."/>
            <person name="Schmidheini T."/>
            <person name="Schreer A."/>
            <person name="Skala J."/>
            <person name="Souciet J.-L."/>
            <person name="Steensma H.Y."/>
            <person name="Talla E."/>
            <person name="Thierry A."/>
            <person name="Vandenbol M."/>
            <person name="van der Aart Q.J.M."/>
            <person name="Van Dyck L."/>
            <person name="Vanoni M."/>
            <person name="Verhasselt P."/>
            <person name="Voet M."/>
            <person name="Volckaert G."/>
            <person name="Wambutt R."/>
            <person name="Watson M.D."/>
            <person name="Weber N."/>
            <person name="Wedler E."/>
            <person name="Wedler H."/>
            <person name="Wipfli P."/>
            <person name="Wolf K."/>
            <person name="Wright L.F."/>
            <person name="Zaccaria P."/>
            <person name="Zimmermann M."/>
            <person name="Zollner A."/>
            <person name="Kleine K."/>
        </authorList>
    </citation>
    <scope>NUCLEOTIDE SEQUENCE [LARGE SCALE GENOMIC DNA]</scope>
    <source>
        <strain>ATCC 204508 / S288c</strain>
    </source>
</reference>
<reference key="3">
    <citation type="journal article" date="2014" name="G3 (Bethesda)">
        <title>The reference genome sequence of Saccharomyces cerevisiae: Then and now.</title>
        <authorList>
            <person name="Engel S.R."/>
            <person name="Dietrich F.S."/>
            <person name="Fisk D.G."/>
            <person name="Binkley G."/>
            <person name="Balakrishnan R."/>
            <person name="Costanzo M.C."/>
            <person name="Dwight S.S."/>
            <person name="Hitz B.C."/>
            <person name="Karra K."/>
            <person name="Nash R.S."/>
            <person name="Weng S."/>
            <person name="Wong E.D."/>
            <person name="Lloyd P."/>
            <person name="Skrzypek M.S."/>
            <person name="Miyasato S.R."/>
            <person name="Simison M."/>
            <person name="Cherry J.M."/>
        </authorList>
    </citation>
    <scope>GENOME REANNOTATION</scope>
    <source>
        <strain>ATCC 204508 / S288c</strain>
    </source>
</reference>
<reference key="4">
    <citation type="journal article" date="2007" name="Genome Res.">
        <title>Approaching a complete repository of sequence-verified protein-encoding clones for Saccharomyces cerevisiae.</title>
        <authorList>
            <person name="Hu Y."/>
            <person name="Rolfs A."/>
            <person name="Bhullar B."/>
            <person name="Murthy T.V.S."/>
            <person name="Zhu C."/>
            <person name="Berger M.F."/>
            <person name="Camargo A.A."/>
            <person name="Kelley F."/>
            <person name="McCarron S."/>
            <person name="Jepson D."/>
            <person name="Richardson A."/>
            <person name="Raphael J."/>
            <person name="Moreira D."/>
            <person name="Taycher E."/>
            <person name="Zuo D."/>
            <person name="Mohr S."/>
            <person name="Kane M.F."/>
            <person name="Williamson J."/>
            <person name="Simpson A.J.G."/>
            <person name="Bulyk M.L."/>
            <person name="Harlow E."/>
            <person name="Marsischky G."/>
            <person name="Kolodner R.D."/>
            <person name="LaBaer J."/>
        </authorList>
    </citation>
    <scope>NUCLEOTIDE SEQUENCE [GENOMIC DNA]</scope>
    <source>
        <strain>ATCC 204508 / S288c</strain>
    </source>
</reference>
<reference key="5">
    <citation type="journal article" date="2007" name="J. Proteome Res.">
        <title>Large-scale phosphorylation analysis of alpha-factor-arrested Saccharomyces cerevisiae.</title>
        <authorList>
            <person name="Li X."/>
            <person name="Gerber S.A."/>
            <person name="Rudner A.D."/>
            <person name="Beausoleil S.A."/>
            <person name="Haas W."/>
            <person name="Villen J."/>
            <person name="Elias J.E."/>
            <person name="Gygi S.P."/>
        </authorList>
    </citation>
    <scope>PHOSPHORYLATION [LARGE SCALE ANALYSIS] AT SER-106</scope>
    <scope>IDENTIFICATION BY MASS SPECTROMETRY [LARGE SCALE ANALYSIS]</scope>
    <source>
        <strain>ADR376</strain>
    </source>
</reference>
<reference key="6">
    <citation type="journal article" date="2009" name="Science">
        <title>Global analysis of Cdk1 substrate phosphorylation sites provides insights into evolution.</title>
        <authorList>
            <person name="Holt L.J."/>
            <person name="Tuch B.B."/>
            <person name="Villen J."/>
            <person name="Johnson A.D."/>
            <person name="Gygi S.P."/>
            <person name="Morgan D.O."/>
        </authorList>
    </citation>
    <scope>PHOSPHORYLATION [LARGE SCALE ANALYSIS] AT SER-106</scope>
    <scope>IDENTIFICATION BY MASS SPECTROMETRY [LARGE SCALE ANALYSIS]</scope>
</reference>
<accession>P53274</accession>
<accession>D6VUQ8</accession>
<accession>E9PAG3</accession>
<name>YG36_YEAST</name>
<sequence length="230" mass="25846">MPVPSVTVTTDNEYEDISSFSSIDSYKPEPFTGFKDSEAPEQPLLKNDTIVGKGQLEDDSNVDDQHRHSDVHSHHSSSTLKRPTSNSIEKMVTHNALEGNSETVDSLKEDGLNLNKKALPDITAPVTNSAHDAAFPEEYRLETETGLVKLKTLESLKREDSRVSSTKKEHINDHTDMHSTRSKVTTNSQGSSLEPNKLNMAVEKNKKRIEKYQKHKSEKGIKGFFHRIFD</sequence>
<protein>
    <recommendedName>
        <fullName>Uncharacterized protein YGR126W</fullName>
    </recommendedName>
</protein>
<gene>
    <name type="ordered locus">YGR126W</name>
    <name type="ORF">G6365</name>
</gene>
<proteinExistence type="evidence at protein level"/>
<feature type="chain" id="PRO_0000202820" description="Uncharacterized protein YGR126W">
    <location>
        <begin position="1"/>
        <end position="230"/>
    </location>
</feature>
<feature type="region of interest" description="Disordered" evidence="1">
    <location>
        <begin position="1"/>
        <end position="88"/>
    </location>
</feature>
<feature type="region of interest" description="Disordered" evidence="1">
    <location>
        <begin position="156"/>
        <end position="203"/>
    </location>
</feature>
<feature type="compositionally biased region" description="Polar residues" evidence="1">
    <location>
        <begin position="1"/>
        <end position="11"/>
    </location>
</feature>
<feature type="compositionally biased region" description="Basic and acidic residues" evidence="1">
    <location>
        <begin position="63"/>
        <end position="73"/>
    </location>
</feature>
<feature type="compositionally biased region" description="Polar residues" evidence="1">
    <location>
        <begin position="79"/>
        <end position="88"/>
    </location>
</feature>
<feature type="compositionally biased region" description="Basic and acidic residues" evidence="1">
    <location>
        <begin position="156"/>
        <end position="179"/>
    </location>
</feature>
<feature type="compositionally biased region" description="Polar residues" evidence="1">
    <location>
        <begin position="182"/>
        <end position="194"/>
    </location>
</feature>
<feature type="modified residue" description="Phosphoserine" evidence="2 3">
    <location>
        <position position="106"/>
    </location>
</feature>
<organism>
    <name type="scientific">Saccharomyces cerevisiae (strain ATCC 204508 / S288c)</name>
    <name type="common">Baker's yeast</name>
    <dbReference type="NCBI Taxonomy" id="559292"/>
    <lineage>
        <taxon>Eukaryota</taxon>
        <taxon>Fungi</taxon>
        <taxon>Dikarya</taxon>
        <taxon>Ascomycota</taxon>
        <taxon>Saccharomycotina</taxon>
        <taxon>Saccharomycetes</taxon>
        <taxon>Saccharomycetales</taxon>
        <taxon>Saccharomycetaceae</taxon>
        <taxon>Saccharomyces</taxon>
    </lineage>
</organism>
<keyword id="KW-0597">Phosphoprotein</keyword>
<keyword id="KW-1185">Reference proteome</keyword>
<dbReference type="EMBL" id="Z72911">
    <property type="protein sequence ID" value="CAA97137.1"/>
    <property type="molecule type" value="Genomic_DNA"/>
</dbReference>
<dbReference type="EMBL" id="Z72912">
    <property type="protein sequence ID" value="CAA97139.2"/>
    <property type="molecule type" value="Genomic_DNA"/>
</dbReference>
<dbReference type="EMBL" id="AY557777">
    <property type="protein sequence ID" value="AAS56103.1"/>
    <property type="molecule type" value="Genomic_DNA"/>
</dbReference>
<dbReference type="EMBL" id="BK006941">
    <property type="protein sequence ID" value="DAA08219.1"/>
    <property type="molecule type" value="Genomic_DNA"/>
</dbReference>
<dbReference type="PIR" id="S64435">
    <property type="entry name" value="S64435"/>
</dbReference>
<dbReference type="RefSeq" id="NP_011642.3">
    <property type="nucleotide sequence ID" value="NM_001181255.3"/>
</dbReference>
<dbReference type="SMR" id="P53274"/>
<dbReference type="BioGRID" id="33374">
    <property type="interactions" value="34"/>
</dbReference>
<dbReference type="DIP" id="DIP-4829N"/>
<dbReference type="FunCoup" id="P53274">
    <property type="interactions" value="92"/>
</dbReference>
<dbReference type="IntAct" id="P53274">
    <property type="interactions" value="3"/>
</dbReference>
<dbReference type="MINT" id="P53274"/>
<dbReference type="STRING" id="4932.YGR126W"/>
<dbReference type="iPTMnet" id="P53274"/>
<dbReference type="PaxDb" id="4932-YGR126W"/>
<dbReference type="PeptideAtlas" id="P53274"/>
<dbReference type="EnsemblFungi" id="YGR126W_mRNA">
    <property type="protein sequence ID" value="YGR126W"/>
    <property type="gene ID" value="YGR126W"/>
</dbReference>
<dbReference type="GeneID" id="853027"/>
<dbReference type="KEGG" id="sce:YGR126W"/>
<dbReference type="AGR" id="SGD:S000003358"/>
<dbReference type="SGD" id="S000003358">
    <property type="gene designation" value="YGR126W"/>
</dbReference>
<dbReference type="VEuPathDB" id="FungiDB:YGR126W"/>
<dbReference type="eggNOG" id="ENOG502S1BK">
    <property type="taxonomic scope" value="Eukaryota"/>
</dbReference>
<dbReference type="HOGENOM" id="CLU_111702_0_0_1"/>
<dbReference type="InParanoid" id="P53274"/>
<dbReference type="OMA" id="PEEYQME"/>
<dbReference type="OrthoDB" id="4035738at2759"/>
<dbReference type="BioCyc" id="YEAST:G3O-30832-MONOMER"/>
<dbReference type="BioGRID-ORCS" id="853027">
    <property type="hits" value="0 hits in 10 CRISPR screens"/>
</dbReference>
<dbReference type="PRO" id="PR:P53274"/>
<dbReference type="Proteomes" id="UP000002311">
    <property type="component" value="Chromosome VII"/>
</dbReference>
<dbReference type="RNAct" id="P53274">
    <property type="molecule type" value="protein"/>
</dbReference>
<dbReference type="GO" id="GO:0005737">
    <property type="term" value="C:cytoplasm"/>
    <property type="evidence" value="ECO:0007005"/>
    <property type="project" value="SGD"/>
</dbReference>
<dbReference type="GO" id="GO:0005634">
    <property type="term" value="C:nucleus"/>
    <property type="evidence" value="ECO:0007005"/>
    <property type="project" value="SGD"/>
</dbReference>